<dbReference type="EC" id="4.2.2.n1" evidence="1"/>
<dbReference type="EMBL" id="CP000447">
    <property type="protein sequence ID" value="ABI70993.1"/>
    <property type="molecule type" value="Genomic_DNA"/>
</dbReference>
<dbReference type="RefSeq" id="WP_011636614.1">
    <property type="nucleotide sequence ID" value="NC_008345.1"/>
</dbReference>
<dbReference type="SMR" id="Q085S2"/>
<dbReference type="STRING" id="318167.Sfri_1140"/>
<dbReference type="CAZy" id="GH23">
    <property type="family name" value="Glycoside Hydrolase Family 23"/>
</dbReference>
<dbReference type="KEGG" id="sfr:Sfri_1140"/>
<dbReference type="eggNOG" id="COG4623">
    <property type="taxonomic scope" value="Bacteria"/>
</dbReference>
<dbReference type="HOGENOM" id="CLU_027494_0_1_6"/>
<dbReference type="OrthoDB" id="9815002at2"/>
<dbReference type="Proteomes" id="UP000000684">
    <property type="component" value="Chromosome"/>
</dbReference>
<dbReference type="GO" id="GO:0009279">
    <property type="term" value="C:cell outer membrane"/>
    <property type="evidence" value="ECO:0007669"/>
    <property type="project" value="UniProtKB-SubCell"/>
</dbReference>
<dbReference type="GO" id="GO:0008933">
    <property type="term" value="F:peptidoglycan lytic transglycosylase activity"/>
    <property type="evidence" value="ECO:0007669"/>
    <property type="project" value="UniProtKB-UniRule"/>
</dbReference>
<dbReference type="GO" id="GO:0016998">
    <property type="term" value="P:cell wall macromolecule catabolic process"/>
    <property type="evidence" value="ECO:0007669"/>
    <property type="project" value="UniProtKB-UniRule"/>
</dbReference>
<dbReference type="GO" id="GO:0071555">
    <property type="term" value="P:cell wall organization"/>
    <property type="evidence" value="ECO:0007669"/>
    <property type="project" value="UniProtKB-KW"/>
</dbReference>
<dbReference type="GO" id="GO:0009253">
    <property type="term" value="P:peptidoglycan catabolic process"/>
    <property type="evidence" value="ECO:0007669"/>
    <property type="project" value="TreeGrafter"/>
</dbReference>
<dbReference type="CDD" id="cd13403">
    <property type="entry name" value="MLTF-like"/>
    <property type="match status" value="1"/>
</dbReference>
<dbReference type="CDD" id="cd01009">
    <property type="entry name" value="PBP2_YfhD_N"/>
    <property type="match status" value="1"/>
</dbReference>
<dbReference type="FunFam" id="1.10.530.10:FF:000003">
    <property type="entry name" value="Membrane-bound lytic murein transglycosylase F"/>
    <property type="match status" value="1"/>
</dbReference>
<dbReference type="Gene3D" id="1.10.530.10">
    <property type="match status" value="1"/>
</dbReference>
<dbReference type="Gene3D" id="3.40.190.10">
    <property type="entry name" value="Periplasmic binding protein-like II"/>
    <property type="match status" value="2"/>
</dbReference>
<dbReference type="HAMAP" id="MF_02016">
    <property type="entry name" value="MltF"/>
    <property type="match status" value="1"/>
</dbReference>
<dbReference type="InterPro" id="IPR023346">
    <property type="entry name" value="Lysozyme-like_dom_sf"/>
</dbReference>
<dbReference type="InterPro" id="IPR023703">
    <property type="entry name" value="MltF"/>
</dbReference>
<dbReference type="InterPro" id="IPR001638">
    <property type="entry name" value="Solute-binding_3/MltF_N"/>
</dbReference>
<dbReference type="InterPro" id="IPR008258">
    <property type="entry name" value="Transglycosylase_SLT_dom_1"/>
</dbReference>
<dbReference type="NCBIfam" id="NF008112">
    <property type="entry name" value="PRK10859.1"/>
    <property type="match status" value="1"/>
</dbReference>
<dbReference type="PANTHER" id="PTHR35936">
    <property type="entry name" value="MEMBRANE-BOUND LYTIC MUREIN TRANSGLYCOSYLASE F"/>
    <property type="match status" value="1"/>
</dbReference>
<dbReference type="PANTHER" id="PTHR35936:SF32">
    <property type="entry name" value="MEMBRANE-BOUND LYTIC MUREIN TRANSGLYCOSYLASE F"/>
    <property type="match status" value="1"/>
</dbReference>
<dbReference type="Pfam" id="PF00497">
    <property type="entry name" value="SBP_bac_3"/>
    <property type="match status" value="1"/>
</dbReference>
<dbReference type="Pfam" id="PF01464">
    <property type="entry name" value="SLT"/>
    <property type="match status" value="1"/>
</dbReference>
<dbReference type="SMART" id="SM00062">
    <property type="entry name" value="PBPb"/>
    <property type="match status" value="1"/>
</dbReference>
<dbReference type="SUPFAM" id="SSF53955">
    <property type="entry name" value="Lysozyme-like"/>
    <property type="match status" value="1"/>
</dbReference>
<dbReference type="SUPFAM" id="SSF53850">
    <property type="entry name" value="Periplasmic binding protein-like II"/>
    <property type="match status" value="1"/>
</dbReference>
<dbReference type="PROSITE" id="PS51257">
    <property type="entry name" value="PROKAR_LIPOPROTEIN"/>
    <property type="match status" value="1"/>
</dbReference>
<comment type="function">
    <text evidence="1">Murein-degrading enzyme that degrades murein glycan strands and insoluble, high-molecular weight murein sacculi, with the concomitant formation of a 1,6-anhydromuramoyl product. Lytic transglycosylases (LTs) play an integral role in the metabolism of the peptidoglycan (PG) sacculus. Their lytic action creates space within the PG sacculus to allow for its expansion as well as for the insertion of various structures such as secretion systems and flagella.</text>
</comment>
<comment type="catalytic activity">
    <reaction evidence="1">
        <text>Exolytic cleavage of the (1-&gt;4)-beta-glycosidic linkage between N-acetylmuramic acid (MurNAc) and N-acetylglucosamine (GlcNAc) residues in peptidoglycan, from either the reducing or the non-reducing ends of the peptidoglycan chains, with concomitant formation of a 1,6-anhydrobond in the MurNAc residue.</text>
        <dbReference type="EC" id="4.2.2.n1"/>
    </reaction>
</comment>
<comment type="subcellular location">
    <subcellularLocation>
        <location>Cell outer membrane</location>
        <topology>Peripheral membrane protein</topology>
    </subcellularLocation>
    <text evidence="1">Attached to the inner leaflet of the outer membrane.</text>
</comment>
<comment type="domain">
    <text evidence="1">The N-terminal domain does not have lytic activity and probably modulates enzymatic activity. The C-terminal domain is the catalytic active domain.</text>
</comment>
<comment type="similarity">
    <text evidence="1">In the N-terminal section; belongs to the bacterial solute-binding protein 3 family.</text>
</comment>
<comment type="similarity">
    <text evidence="1">In the C-terminal section; belongs to the transglycosylase Slt family.</text>
</comment>
<organism>
    <name type="scientific">Shewanella frigidimarina (strain NCIMB 400)</name>
    <dbReference type="NCBI Taxonomy" id="318167"/>
    <lineage>
        <taxon>Bacteria</taxon>
        <taxon>Pseudomonadati</taxon>
        <taxon>Pseudomonadota</taxon>
        <taxon>Gammaproteobacteria</taxon>
        <taxon>Alteromonadales</taxon>
        <taxon>Shewanellaceae</taxon>
        <taxon>Shewanella</taxon>
    </lineage>
</organism>
<accession>Q085S2</accession>
<evidence type="ECO:0000255" key="1">
    <source>
        <dbReference type="HAMAP-Rule" id="MF_02016"/>
    </source>
</evidence>
<keyword id="KW-0998">Cell outer membrane</keyword>
<keyword id="KW-0961">Cell wall biogenesis/degradation</keyword>
<keyword id="KW-0456">Lyase</keyword>
<keyword id="KW-0472">Membrane</keyword>
<keyword id="KW-1185">Reference proteome</keyword>
<keyword id="KW-0732">Signal</keyword>
<reference key="1">
    <citation type="submission" date="2006-08" db="EMBL/GenBank/DDBJ databases">
        <title>Complete sequence of Shewanella frigidimarina NCIMB 400.</title>
        <authorList>
            <consortium name="US DOE Joint Genome Institute"/>
            <person name="Copeland A."/>
            <person name="Lucas S."/>
            <person name="Lapidus A."/>
            <person name="Barry K."/>
            <person name="Detter J.C."/>
            <person name="Glavina del Rio T."/>
            <person name="Hammon N."/>
            <person name="Israni S."/>
            <person name="Dalin E."/>
            <person name="Tice H."/>
            <person name="Pitluck S."/>
            <person name="Fredrickson J.K."/>
            <person name="Kolker E."/>
            <person name="McCuel L.A."/>
            <person name="DiChristina T."/>
            <person name="Nealson K.H."/>
            <person name="Newman D."/>
            <person name="Tiedje J.M."/>
            <person name="Zhou J."/>
            <person name="Romine M.F."/>
            <person name="Culley D.E."/>
            <person name="Serres M."/>
            <person name="Chertkov O."/>
            <person name="Brettin T."/>
            <person name="Bruce D."/>
            <person name="Han C."/>
            <person name="Tapia R."/>
            <person name="Gilna P."/>
            <person name="Schmutz J."/>
            <person name="Larimer F."/>
            <person name="Land M."/>
            <person name="Hauser L."/>
            <person name="Kyrpides N."/>
            <person name="Mikhailova N."/>
            <person name="Richardson P."/>
        </authorList>
    </citation>
    <scope>NUCLEOTIDE SEQUENCE [LARGE SCALE GENOMIC DNA]</scope>
    <source>
        <strain>NCIMB 400</strain>
    </source>
</reference>
<feature type="signal peptide" evidence="1">
    <location>
        <begin position="1"/>
        <end position="16"/>
    </location>
</feature>
<feature type="chain" id="PRO_5000130606" description="Membrane-bound lytic murein transglycosylase F">
    <location>
        <begin position="17"/>
        <end position="476"/>
    </location>
</feature>
<feature type="region of interest" description="Non-LT domain" evidence="1">
    <location>
        <begin position="17"/>
        <end position="259"/>
    </location>
</feature>
<feature type="region of interest" description="LT domain" evidence="1">
    <location>
        <begin position="260"/>
        <end position="476"/>
    </location>
</feature>
<feature type="active site" evidence="1">
    <location>
        <position position="304"/>
    </location>
</feature>
<name>MLTF_SHEFN</name>
<gene>
    <name evidence="1" type="primary">mltF</name>
    <name type="ordered locus">Sfri_1140</name>
</gene>
<protein>
    <recommendedName>
        <fullName evidence="1">Membrane-bound lytic murein transglycosylase F</fullName>
        <ecNumber evidence="1">4.2.2.n1</ecNumber>
    </recommendedName>
    <alternativeName>
        <fullName evidence="1">Murein lyase F</fullName>
    </alternativeName>
</protein>
<proteinExistence type="inferred from homology"/>
<sequence length="476" mass="54388">MIKTLFIILLCGILSACQPVDIQDVDIAAPAPKRTVLKVGTLYGPQIYLNSEQGESGFDFEMAQRFADYLAVPLEMIPYTNRKQLFAALKENKIDIIAAGIAKTPNRSQQFKLGPTLYKVNQVLVYKEGTPEPKDISTLSGEITVMANSSSVNTLTKLQKDYPELMWNQVNDKDNEELFALIANGELNYTISDSNSLLINQRFLPELRAGMILEEKVEVVWLLPPNNSDRLMSKLLAFWHKERRAGTLEHLNEKYFGHVKRFDYVDTRAFIRAIDNILPEYRSFFEEYSGELDWRKLAAASYQESHWNPSARSPTGVRGMMMLTQPTAAYVGVDDRLDAEQSIRGGAFYLKDMMERLPDTISEAQRIWFALASYNIGLGHVEDARRLTESMGMDPSAWRDVKKVLPLLQQSKYYKQTRYGYARGSEAVHYVDSIRRYYDTLVWIDNQTKTMEIIEEKEQVEVIAEEVPAKSHVSAQ</sequence>